<comment type="function">
    <text evidence="2">Component of the cytochrome c oxidase, the last enzyme in the mitochondrial electron transport chain which drives oxidative phosphorylation. The respiratory chain contains 3 multisubunit complexes succinate dehydrogenase (complex II, CII), ubiquinol-cytochrome c oxidoreductase (cytochrome b-c1 complex, complex III, CIII) and cytochrome c oxidase (complex IV, CIV), that cooperate to transfer electrons derived from NADH and succinate to molecular oxygen, creating an electrochemical gradient over the inner membrane that drives transmembrane transport and the ATP synthase. Cytochrome c oxidase is the component of the respiratory chain that catalyzes the reduction of oxygen to water. Electrons originating from reduced cytochrome c in the intermembrane space (IMS) are transferred via the dinuclear copper A center (CU(A)) of subunit 2 and heme A of subunit 1 to the active site in subunit 1, a binuclear center (BNC) formed by heme A3 and copper B (CU(B)). The BNC reduces molecular oxygen to 2 water molecules using 4 electrons from cytochrome c in the IMS and 4 protons from the mitochondrial matrix.</text>
</comment>
<comment type="pathway">
    <text evidence="2">Energy metabolism; oxidative phosphorylation.</text>
</comment>
<comment type="subunit">
    <text evidence="1 4">Component of the cytochrome c oxidase (complex IV, CIV), a multisubunit enzyme composed of 14 subunits. The complex is composed of a catalytic core of 3 subunits MT-CO1, MT-CO2 and MT-CO3, encoded in the mitochondrial DNA, and 11 supernumerary subunits COX4I, COX5A, COX5B, COX6A, COX6B, COX6C, COX7A, COX7B, COX7C, COX8 and NDUFA4, which are encoded in the nuclear genome. The complex exists as a monomer or a dimer and forms supercomplexes (SCs) in the inner mitochondrial membrane with NADH-ubiquinone oxidoreductase (complex I, CI) and ubiquinol-cytochrome c oxidoreductase (cytochrome b-c1 complex, complex III, CIII), resulting in different assemblies (supercomplex SCI(1)III(2)IV(1) and megacomplex MCI(2)III(2)IV(2)) (By similarity). Interacts with AFG1L (By similarity). Interacts with RAB5IF (By similarity).</text>
</comment>
<comment type="subcellular location">
    <subcellularLocation>
        <location evidence="1">Mitochondrion inner membrane</location>
        <topology evidence="1">Peripheral membrane protein</topology>
        <orientation evidence="1">Matrix side</orientation>
    </subcellularLocation>
</comment>
<comment type="PTM">
    <text evidence="4">In response to mitochondrial stress, the precursor protein is ubiquitinated by the SIFI complex in the cytoplasm before mitochondrial import, leading to its degradation. Within the SIFI complex, UBR4 initiates ubiquitin chain that are further elongated or branched by KCMF1.</text>
</comment>
<comment type="similarity">
    <text evidence="5">Belongs to the cytochrome c oxidase subunit 5A family.</text>
</comment>
<organism>
    <name type="scientific">Cebuella pygmaea</name>
    <name type="common">Pygmy marmoset</name>
    <name type="synonym">Callithrix pygmaea</name>
    <dbReference type="NCBI Taxonomy" id="9493"/>
    <lineage>
        <taxon>Eukaryota</taxon>
        <taxon>Metazoa</taxon>
        <taxon>Chordata</taxon>
        <taxon>Craniata</taxon>
        <taxon>Vertebrata</taxon>
        <taxon>Euteleostomi</taxon>
        <taxon>Mammalia</taxon>
        <taxon>Eutheria</taxon>
        <taxon>Euarchontoglires</taxon>
        <taxon>Primates</taxon>
        <taxon>Haplorrhini</taxon>
        <taxon>Platyrrhini</taxon>
        <taxon>Cebidae</taxon>
        <taxon>Callitrichinae</taxon>
        <taxon>Cebuella</taxon>
    </lineage>
</organism>
<sequence>MLGAALRRCAVAATARAGPRGLLHSAPTPGPAAAIQSVRCYSHGSSETDEEFDARWVTYFNKPDIDAWELRKGINTLVTYDLVPEPKIIDAALRACRRLNDFASTVRILEAVKDKAGPHKEIYPYVIQELRPTLNELGISTPEELGLDKV</sequence>
<proteinExistence type="evidence at transcript level"/>
<reference key="1">
    <citation type="journal article" date="2008" name="BMC Evol. Biol.">
        <title>Molecular evolution of the cytochrome c oxidase subunit 5A gene in primates.</title>
        <authorList>
            <person name="Uddin M."/>
            <person name="Opazo J.C."/>
            <person name="Wildman D.E."/>
            <person name="Sherwood C.C."/>
            <person name="Hof P.R."/>
            <person name="Goodman M."/>
            <person name="Grossman L.I."/>
        </authorList>
    </citation>
    <scope>NUCLEOTIDE SEQUENCE [MRNA]</scope>
</reference>
<evidence type="ECO:0000250" key="1">
    <source>
        <dbReference type="UniProtKB" id="P00426"/>
    </source>
</evidence>
<evidence type="ECO:0000250" key="2">
    <source>
        <dbReference type="UniProtKB" id="P00427"/>
    </source>
</evidence>
<evidence type="ECO:0000250" key="3">
    <source>
        <dbReference type="UniProtKB" id="P12787"/>
    </source>
</evidence>
<evidence type="ECO:0000250" key="4">
    <source>
        <dbReference type="UniProtKB" id="P20674"/>
    </source>
</evidence>
<evidence type="ECO:0000305" key="5"/>
<protein>
    <recommendedName>
        <fullName>Cytochrome c oxidase subunit 5A, mitochondrial</fullName>
    </recommendedName>
    <alternativeName>
        <fullName>Cytochrome c oxidase polypeptide Va</fullName>
    </alternativeName>
</protein>
<keyword id="KW-0007">Acetylation</keyword>
<keyword id="KW-0349">Heme</keyword>
<keyword id="KW-0408">Iron</keyword>
<keyword id="KW-0472">Membrane</keyword>
<keyword id="KW-0479">Metal-binding</keyword>
<keyword id="KW-0496">Mitochondrion</keyword>
<keyword id="KW-0999">Mitochondrion inner membrane</keyword>
<keyword id="KW-0597">Phosphoprotein</keyword>
<keyword id="KW-0809">Transit peptide</keyword>
<keyword id="KW-0832">Ubl conjugation</keyword>
<accession>B0VYX9</accession>
<feature type="transit peptide" description="Mitochondrion" evidence="1">
    <location>
        <begin position="1"/>
        <end position="41"/>
    </location>
</feature>
<feature type="chain" id="PRO_0000355977" description="Cytochrome c oxidase subunit 5A, mitochondrial">
    <location>
        <begin position="42"/>
        <end position="150"/>
    </location>
</feature>
<feature type="short sequence motif" description="SIFI-degron" evidence="4">
    <location>
        <begin position="2"/>
        <end position="17"/>
    </location>
</feature>
<feature type="modified residue" description="N6-acetyllysine" evidence="3">
    <location>
        <position position="87"/>
    </location>
</feature>
<feature type="modified residue" description="N6-acetyllysine" evidence="3">
    <location>
        <position position="113"/>
    </location>
</feature>
<feature type="modified residue" description="Phosphothreonine" evidence="4">
    <location>
        <position position="141"/>
    </location>
</feature>
<dbReference type="EMBL" id="DQ987246">
    <property type="protein sequence ID" value="ABK92293.1"/>
    <property type="molecule type" value="mRNA"/>
</dbReference>
<dbReference type="SMR" id="B0VYX9"/>
<dbReference type="UniPathway" id="UPA00705"/>
<dbReference type="GO" id="GO:0005743">
    <property type="term" value="C:mitochondrial inner membrane"/>
    <property type="evidence" value="ECO:0007669"/>
    <property type="project" value="UniProtKB-SubCell"/>
</dbReference>
<dbReference type="GO" id="GO:0045277">
    <property type="term" value="C:respiratory chain complex IV"/>
    <property type="evidence" value="ECO:0007669"/>
    <property type="project" value="InterPro"/>
</dbReference>
<dbReference type="GO" id="GO:0046872">
    <property type="term" value="F:metal ion binding"/>
    <property type="evidence" value="ECO:0007669"/>
    <property type="project" value="UniProtKB-KW"/>
</dbReference>
<dbReference type="GO" id="GO:0006123">
    <property type="term" value="P:mitochondrial electron transport, cytochrome c to oxygen"/>
    <property type="evidence" value="ECO:0007669"/>
    <property type="project" value="InterPro"/>
</dbReference>
<dbReference type="CDD" id="cd00923">
    <property type="entry name" value="Cyt_c_Oxidase_Va"/>
    <property type="match status" value="1"/>
</dbReference>
<dbReference type="FunFam" id="1.25.40.40:FF:000002">
    <property type="entry name" value="cytochrome c oxidase subunit 5A, mitochondrial"/>
    <property type="match status" value="1"/>
</dbReference>
<dbReference type="Gene3D" id="1.25.40.40">
    <property type="entry name" value="Cytochrome c oxidase, subunit Va/VI"/>
    <property type="match status" value="1"/>
</dbReference>
<dbReference type="InterPro" id="IPR003204">
    <property type="entry name" value="Cyt_c_oxidase_su5A/6"/>
</dbReference>
<dbReference type="InterPro" id="IPR036545">
    <property type="entry name" value="Cyt_c_oxidase_su5A/6_sf"/>
</dbReference>
<dbReference type="PANTHER" id="PTHR14200">
    <property type="entry name" value="CYTOCHROME C OXIDASE POLYPEPTIDE"/>
    <property type="match status" value="1"/>
</dbReference>
<dbReference type="PANTHER" id="PTHR14200:SF16">
    <property type="entry name" value="CYTOCHROME C OXIDASE SUBUNIT 5A, MITOCHONDRIAL"/>
    <property type="match status" value="1"/>
</dbReference>
<dbReference type="Pfam" id="PF02284">
    <property type="entry name" value="COX5A"/>
    <property type="match status" value="1"/>
</dbReference>
<dbReference type="SUPFAM" id="SSF48479">
    <property type="entry name" value="Cytochrome c oxidase subunit E"/>
    <property type="match status" value="1"/>
</dbReference>
<gene>
    <name type="primary">COX5A</name>
</gene>
<name>COX5A_CEBPY</name>